<dbReference type="EC" id="5.1.3.14" evidence="1 3 8"/>
<dbReference type="EMBL" id="L18799">
    <property type="protein sequence ID" value="AAC36847.1"/>
    <property type="molecule type" value="Unassigned_DNA"/>
</dbReference>
<dbReference type="EMBL" id="M87049">
    <property type="protein sequence ID" value="AAA67586.1"/>
    <property type="status" value="ALT_INIT"/>
    <property type="molecule type" value="Genomic_DNA"/>
</dbReference>
<dbReference type="EMBL" id="U00096">
    <property type="protein sequence ID" value="AAT48211.1"/>
    <property type="molecule type" value="Genomic_DNA"/>
</dbReference>
<dbReference type="EMBL" id="AP009048">
    <property type="protein sequence ID" value="BAE77512.1"/>
    <property type="molecule type" value="Genomic_DNA"/>
</dbReference>
<dbReference type="PIR" id="E65182">
    <property type="entry name" value="E65182"/>
</dbReference>
<dbReference type="RefSeq" id="WP_001340422.1">
    <property type="nucleotide sequence ID" value="NZ_SSZK01000025.1"/>
</dbReference>
<dbReference type="RefSeq" id="YP_026253.1">
    <property type="nucleotide sequence ID" value="NC_000913.3"/>
</dbReference>
<dbReference type="PDB" id="1F6D">
    <property type="method" value="X-ray"/>
    <property type="resolution" value="2.50 A"/>
    <property type="chains" value="A/B/C/D=1-376"/>
</dbReference>
<dbReference type="PDB" id="1VGV">
    <property type="method" value="X-ray"/>
    <property type="resolution" value="2.31 A"/>
    <property type="chains" value="A/B/C/D=2-376"/>
</dbReference>
<dbReference type="PDBsum" id="1F6D"/>
<dbReference type="PDBsum" id="1VGV"/>
<dbReference type="SMR" id="P27828"/>
<dbReference type="BioGRID" id="4263321">
    <property type="interactions" value="151"/>
</dbReference>
<dbReference type="FunCoup" id="P27828">
    <property type="interactions" value="605"/>
</dbReference>
<dbReference type="STRING" id="511145.b3786"/>
<dbReference type="DrugBank" id="DB03435">
    <property type="generic name" value="Uridine-5'-Diphosphate"/>
</dbReference>
<dbReference type="DrugBank" id="DB02196">
    <property type="generic name" value="Uridine-Diphosphate-N-Acetylgalactosamine"/>
</dbReference>
<dbReference type="jPOST" id="P27828"/>
<dbReference type="PaxDb" id="511145-b3786"/>
<dbReference type="EnsemblBacteria" id="AAT48211">
    <property type="protein sequence ID" value="AAT48211"/>
    <property type="gene ID" value="b3786"/>
</dbReference>
<dbReference type="GeneID" id="944789"/>
<dbReference type="KEGG" id="ecj:JW5600"/>
<dbReference type="KEGG" id="eco:b3786"/>
<dbReference type="PATRIC" id="fig|511145.12.peg.3902"/>
<dbReference type="EchoBASE" id="EB1420"/>
<dbReference type="eggNOG" id="COG0381">
    <property type="taxonomic scope" value="Bacteria"/>
</dbReference>
<dbReference type="HOGENOM" id="CLU_041674_1_0_6"/>
<dbReference type="InParanoid" id="P27828"/>
<dbReference type="OMA" id="CLTLRYN"/>
<dbReference type="OrthoDB" id="9803238at2"/>
<dbReference type="PhylomeDB" id="P27828"/>
<dbReference type="BioCyc" id="EcoCyc:UDPGLCNACEPIM-MONOMER"/>
<dbReference type="BioCyc" id="MetaCyc:UDPGLCNACEPIM-MONOMER"/>
<dbReference type="BRENDA" id="3.2.1.183">
    <property type="organism ID" value="1960"/>
</dbReference>
<dbReference type="BRENDA" id="5.1.3.14">
    <property type="organism ID" value="2026"/>
</dbReference>
<dbReference type="SABIO-RK" id="P27828"/>
<dbReference type="UniPathway" id="UPA00566"/>
<dbReference type="EvolutionaryTrace" id="P27828"/>
<dbReference type="PRO" id="PR:P27828"/>
<dbReference type="Proteomes" id="UP000000625">
    <property type="component" value="Chromosome"/>
</dbReference>
<dbReference type="GO" id="GO:0005829">
    <property type="term" value="C:cytosol"/>
    <property type="evidence" value="ECO:0000314"/>
    <property type="project" value="EcoCyc"/>
</dbReference>
<dbReference type="GO" id="GO:0042803">
    <property type="term" value="F:protein homodimerization activity"/>
    <property type="evidence" value="ECO:0000314"/>
    <property type="project" value="EcoCyc"/>
</dbReference>
<dbReference type="GO" id="GO:0008761">
    <property type="term" value="F:UDP-N-acetylglucosamine 2-epimerase activity"/>
    <property type="evidence" value="ECO:0000314"/>
    <property type="project" value="EcoCyc"/>
</dbReference>
<dbReference type="GO" id="GO:0009246">
    <property type="term" value="P:enterobacterial common antigen biosynthetic process"/>
    <property type="evidence" value="ECO:0000315"/>
    <property type="project" value="EcoCyc"/>
</dbReference>
<dbReference type="CDD" id="cd03786">
    <property type="entry name" value="GTB_UDP-GlcNAc_2-Epimerase"/>
    <property type="match status" value="1"/>
</dbReference>
<dbReference type="FunFam" id="3.40.50.2000:FF:000043">
    <property type="entry name" value="UDP-N-acetylglucosamine 2-epimerase"/>
    <property type="match status" value="1"/>
</dbReference>
<dbReference type="FunFam" id="3.40.50.2000:FF:000068">
    <property type="entry name" value="UDP-N-acetylglucosamine 2-epimerase"/>
    <property type="match status" value="1"/>
</dbReference>
<dbReference type="Gene3D" id="3.40.50.2000">
    <property type="entry name" value="Glycogen Phosphorylase B"/>
    <property type="match status" value="2"/>
</dbReference>
<dbReference type="HAMAP" id="MF_02028">
    <property type="entry name" value="WecB_RffE"/>
    <property type="match status" value="1"/>
</dbReference>
<dbReference type="InterPro" id="IPR003331">
    <property type="entry name" value="UDP_GlcNAc_Epimerase_2_dom"/>
</dbReference>
<dbReference type="InterPro" id="IPR032892">
    <property type="entry name" value="WecB"/>
</dbReference>
<dbReference type="InterPro" id="IPR029767">
    <property type="entry name" value="WecB-like"/>
</dbReference>
<dbReference type="NCBIfam" id="TIGR00236">
    <property type="entry name" value="wecB"/>
    <property type="match status" value="1"/>
</dbReference>
<dbReference type="PANTHER" id="PTHR43174">
    <property type="entry name" value="UDP-N-ACETYLGLUCOSAMINE 2-EPIMERASE"/>
    <property type="match status" value="1"/>
</dbReference>
<dbReference type="PANTHER" id="PTHR43174:SF2">
    <property type="entry name" value="UDP-N-ACETYLGLUCOSAMINE 2-EPIMERASE"/>
    <property type="match status" value="1"/>
</dbReference>
<dbReference type="Pfam" id="PF02350">
    <property type="entry name" value="Epimerase_2"/>
    <property type="match status" value="1"/>
</dbReference>
<dbReference type="SUPFAM" id="SSF53756">
    <property type="entry name" value="UDP-Glycosyltransferase/glycogen phosphorylase"/>
    <property type="match status" value="1"/>
</dbReference>
<reference key="1">
    <citation type="journal article" date="1993" name="J. Bacteriol.">
        <title>A cytoplasmic protein, NfrC, is required for bacteriophage N4 adsorption.</title>
        <authorList>
            <person name="Kiino D.R."/>
            <person name="Licudine R."/>
            <person name="Wilt K."/>
            <person name="Yang D.H.C."/>
            <person name="Rothman-Denes L.B."/>
        </authorList>
    </citation>
    <scope>NUCLEOTIDE SEQUENCE [GENOMIC DNA]</scope>
    <scope>FUNCTION</scope>
    <scope>SUBCELLULAR LOCATION</scope>
    <source>
        <strain>K12 / MC4100 / ATCC 35695 / DSM 6574</strain>
    </source>
</reference>
<reference key="2">
    <citation type="journal article" date="1992" name="Science">
        <title>Analysis of the Escherichia coli genome: DNA sequence of the region from 84.5 to 86.5 minutes.</title>
        <authorList>
            <person name="Daniels D.L."/>
            <person name="Plunkett G. III"/>
            <person name="Burland V.D."/>
            <person name="Blattner F.R."/>
        </authorList>
    </citation>
    <scope>NUCLEOTIDE SEQUENCE [LARGE SCALE GENOMIC DNA]</scope>
    <source>
        <strain>K12 / MG1655 / ATCC 47076</strain>
    </source>
</reference>
<reference key="3">
    <citation type="journal article" date="1997" name="Science">
        <title>The complete genome sequence of Escherichia coli K-12.</title>
        <authorList>
            <person name="Blattner F.R."/>
            <person name="Plunkett G. III"/>
            <person name="Bloch C.A."/>
            <person name="Perna N.T."/>
            <person name="Burland V."/>
            <person name="Riley M."/>
            <person name="Collado-Vides J."/>
            <person name="Glasner J.D."/>
            <person name="Rode C.K."/>
            <person name="Mayhew G.F."/>
            <person name="Gregor J."/>
            <person name="Davis N.W."/>
            <person name="Kirkpatrick H.A."/>
            <person name="Goeden M.A."/>
            <person name="Rose D.J."/>
            <person name="Mau B."/>
            <person name="Shao Y."/>
        </authorList>
    </citation>
    <scope>NUCLEOTIDE SEQUENCE [LARGE SCALE GENOMIC DNA]</scope>
    <source>
        <strain>K12 / MG1655 / ATCC 47076</strain>
    </source>
</reference>
<reference key="4">
    <citation type="journal article" date="2006" name="Nucleic Acids Res.">
        <title>Escherichia coli K-12: a cooperatively developed annotation snapshot -- 2005.</title>
        <authorList>
            <person name="Riley M."/>
            <person name="Abe T."/>
            <person name="Arnaud M.B."/>
            <person name="Berlyn M.K.B."/>
            <person name="Blattner F.R."/>
            <person name="Chaudhuri R.R."/>
            <person name="Glasner J.D."/>
            <person name="Horiuchi T."/>
            <person name="Keseler I.M."/>
            <person name="Kosuge T."/>
            <person name="Mori H."/>
            <person name="Perna N.T."/>
            <person name="Plunkett G. III"/>
            <person name="Rudd K.E."/>
            <person name="Serres M.H."/>
            <person name="Thomas G.H."/>
            <person name="Thomson N.R."/>
            <person name="Wishart D."/>
            <person name="Wanner B.L."/>
        </authorList>
    </citation>
    <scope>SEQUENCE REVISION TO 191</scope>
</reference>
<reference key="5">
    <citation type="journal article" date="2006" name="Mol. Syst. Biol.">
        <title>Highly accurate genome sequences of Escherichia coli K-12 strains MG1655 and W3110.</title>
        <authorList>
            <person name="Hayashi K."/>
            <person name="Morooka N."/>
            <person name="Yamamoto Y."/>
            <person name="Fujita K."/>
            <person name="Isono K."/>
            <person name="Choi S."/>
            <person name="Ohtsubo E."/>
            <person name="Baba T."/>
            <person name="Wanner B.L."/>
            <person name="Mori H."/>
            <person name="Horiuchi T."/>
        </authorList>
    </citation>
    <scope>NUCLEOTIDE SEQUENCE [LARGE SCALE GENOMIC DNA]</scope>
    <source>
        <strain>K12 / W3110 / ATCC 27325 / DSM 5911</strain>
    </source>
</reference>
<reference key="6">
    <citation type="journal article" date="1990" name="J. Biol. Chem.">
        <title>Biosynthesis of enterobacterial common antigen in Escherichia coli. Biochemical characterization of Tn10 insertion mutants defective in enterobacterial common antigen synthesis.</title>
        <authorList>
            <person name="Meier-Dieter U."/>
            <person name="Starman R."/>
            <person name="Barr K."/>
            <person name="Mayer H."/>
            <person name="Rick P.D."/>
        </authorList>
    </citation>
    <scope>PATHWAY</scope>
</reference>
<reference key="7">
    <citation type="journal article" date="1995" name="J. Bacteriol.">
        <title>Genetic analysis of the dTDP-rhamnose biosynthesis region of the Escherichia coli VW187 (O7:K1) rfb gene cluster: identification of functional homologs of rfbB and rfbA in the rff cluster and correct location of the rffE gene.</title>
        <authorList>
            <person name="Marolda C.L."/>
            <person name="Valvano M.A."/>
        </authorList>
    </citation>
    <scope>FUNCTION</scope>
    <source>
        <strain>O7:K1 / VW187</strain>
    </source>
</reference>
<reference key="8">
    <citation type="journal article" date="1994" name="Mol. Microbiol.">
        <title>Characterization of the dTDP-rhamnose biosynthetic genes encoded in the rfb locus of Shigella flexneri.</title>
        <authorList>
            <person name="Macpherson D.F."/>
            <person name="Manning P.A."/>
            <person name="Morona R."/>
        </authorList>
    </citation>
    <scope>FUNCTION</scope>
</reference>
<reference key="9">
    <citation type="journal article" date="1996" name="J. Am. Chem. Soc.">
        <title>Enzymatic formation and release of a stable glycal intermediate: the mechanism of the reaction catalyzed by UDP-N-acetylglucosamine 2-epimerase.</title>
        <authorList>
            <person name="Sala R.F."/>
            <person name="Morgan P.M."/>
            <person name="Tanner M.E."/>
        </authorList>
    </citation>
    <scope>FUNCTION</scope>
    <scope>CATALYTIC ACTIVITY</scope>
    <scope>REACTION MECHANISM</scope>
</reference>
<reference key="10">
    <citation type="journal article" date="2004" name="Biochim. Biophys. Acta">
        <title>Active site mutants of the 'non-hydrolyzing' UDP-N-acetylglucosamine 2-epimerase from Escherichia coli.</title>
        <authorList>
            <person name="Samuel J."/>
            <person name="Tanner M.E."/>
        </authorList>
    </citation>
    <scope>FUNCTION</scope>
    <scope>CATALYTIC ACTIVITY</scope>
    <scope>ACTIVITY REGULATION</scope>
    <scope>BIOPHYSICOCHEMICAL PROPERTIES</scope>
    <scope>MUTAGENESIS OF LYS-15; ASP-95; GLU-117; GLU-131 AND HIS-213</scope>
</reference>
<reference key="11">
    <citation type="journal article" date="2000" name="Biochemistry">
        <title>The structure of UDP-N-acetylglucosamine 2-epimerase reveals homology to phosphoglycosyl transferases.</title>
        <authorList>
            <person name="Campbell R.E."/>
            <person name="Mosimann S.C."/>
            <person name="Tanner M.E."/>
            <person name="Strynadka N.C."/>
        </authorList>
    </citation>
    <scope>X-RAY CRYSTALLOGRAPHY (2.5 ANGSTROMS) IN COMPLEX WITH UDP</scope>
    <scope>SUBUNIT</scope>
</reference>
<reference key="12">
    <citation type="journal article" date="2005" name="Proteins">
        <title>Structural analysis of a set of proteins resulting from a bacterial genomics project.</title>
        <authorList>
            <person name="Badger J."/>
            <person name="Sauder J.M."/>
            <person name="Adams J.M."/>
            <person name="Antonysamy S."/>
            <person name="Bain K."/>
            <person name="Bergseid M.G."/>
            <person name="Buchanan S.G."/>
            <person name="Buchanan M.D."/>
            <person name="Batiyenko Y."/>
            <person name="Christopher J.A."/>
            <person name="Emtage S."/>
            <person name="Eroshkina A."/>
            <person name="Feil I."/>
            <person name="Furlong E.B."/>
            <person name="Gajiwala K.S."/>
            <person name="Gao X."/>
            <person name="He D."/>
            <person name="Hendle J."/>
            <person name="Huber A."/>
            <person name="Hoda K."/>
            <person name="Kearins P."/>
            <person name="Kissinger C."/>
            <person name="Laubert B."/>
            <person name="Lewis H.A."/>
            <person name="Lin J."/>
            <person name="Loomis K."/>
            <person name="Lorimer D."/>
            <person name="Louie G."/>
            <person name="Maletic M."/>
            <person name="Marsh C.D."/>
            <person name="Miller I."/>
            <person name="Molinari J."/>
            <person name="Muller-Dieckmann H.J."/>
            <person name="Newman J.M."/>
            <person name="Noland B.W."/>
            <person name="Pagarigan B."/>
            <person name="Park F."/>
            <person name="Peat T.S."/>
            <person name="Post K.W."/>
            <person name="Radojicic S."/>
            <person name="Ramos A."/>
            <person name="Romero R."/>
            <person name="Rutter M.E."/>
            <person name="Sanderson W.E."/>
            <person name="Schwinn K.D."/>
            <person name="Tresser J."/>
            <person name="Winhoven J."/>
            <person name="Wright T.A."/>
            <person name="Wu L."/>
            <person name="Xu J."/>
            <person name="Harris T.J.R."/>
        </authorList>
    </citation>
    <scope>X-RAY CRYSTALLOGRAPHY (2.31 ANGSTROMS) OF 2-376 IN COMPLEX WITH UDP-N-ACETYL-ALPHA-D-GLUCOSAMINE</scope>
</reference>
<keyword id="KW-0002">3D-structure</keyword>
<keyword id="KW-0021">Allosteric enzyme</keyword>
<keyword id="KW-0963">Cytoplasm</keyword>
<keyword id="KW-0413">Isomerase</keyword>
<keyword id="KW-1185">Reference proteome</keyword>
<name>WECB_ECOLI</name>
<organism>
    <name type="scientific">Escherichia coli (strain K12)</name>
    <dbReference type="NCBI Taxonomy" id="83333"/>
    <lineage>
        <taxon>Bacteria</taxon>
        <taxon>Pseudomonadati</taxon>
        <taxon>Pseudomonadota</taxon>
        <taxon>Gammaproteobacteria</taxon>
        <taxon>Enterobacterales</taxon>
        <taxon>Enterobacteriaceae</taxon>
        <taxon>Escherichia</taxon>
    </lineage>
</organism>
<sequence length="376" mass="42245">MKVLTVFGTRPEAIKMAPLVHALAKDPFFEAKVCVTAQHREMLDQVLKLFSIVPDYDLNIMQPGQGLTEITCRILEGLKPILAEFKPDVVLVHGDTTTTLATSLAAFYQRIPVGHVEAGLRTGDLYSPWPEEANRTLTGHLAMYHFSPTETSRQNLLRENVADSRIFITGNTVIDALLWVRDQVMSSDKLRSELAANYPFIDPDKKMILVTGHRRESFGRGFEEICHALADIATTHQDIQIVYPVHLNPNVREPVNRILGHVKNVILIDPQEYLPFVWLMNHAWLILTDSGGIQEEAPSLGKPVLVMRDTTERPEAVTAGTVRLVGTDKQRIVEEVTRLLKDENEYQAMSRAHNPYGDGQACSRILEALKNNRISL</sequence>
<comment type="function">
    <text evidence="3 5 6 7 8">Catalyzes the reversible epimerization at C-2 of UDP-N-acetylglucosamine (UDP-GlcNAc) and thereby provides bacteria with UDP-N-acetylmannosamine (UDP-ManNAc), the activated donor of ManNAc residues. Also involved in bacteriophage N4 adsorption.</text>
</comment>
<comment type="catalytic activity">
    <reaction evidence="1 3 8">
        <text>UDP-N-acetyl-alpha-D-glucosamine = UDP-N-acetyl-alpha-D-mannosamine</text>
        <dbReference type="Rhea" id="RHEA:17213"/>
        <dbReference type="ChEBI" id="CHEBI:57705"/>
        <dbReference type="ChEBI" id="CHEBI:68623"/>
        <dbReference type="EC" id="5.1.3.14"/>
    </reaction>
</comment>
<comment type="activity regulation">
    <text evidence="3">Allosterically activated by its substrate, UDP-GlcNAc.</text>
</comment>
<comment type="biophysicochemical properties">
    <kinetics>
        <KM evidence="3">0.6 mM for UDP-GlcNAc</KM>
        <text evidence="3">kcat is 7.1 sec(-1).</text>
    </kinetics>
</comment>
<comment type="pathway">
    <text evidence="1 12">Bacterial outer membrane biogenesis; enterobacterial common antigen biosynthesis.</text>
</comment>
<comment type="subunit">
    <text evidence="1 2">Homodimer.</text>
</comment>
<comment type="subcellular location">
    <subcellularLocation>
        <location evidence="1 7">Cytoplasm</location>
    </subcellularLocation>
</comment>
<comment type="similarity">
    <text evidence="1 11">Belongs to the UDP-N-acetylglucosamine 2-epimerase family.</text>
</comment>
<comment type="sequence caution" evidence="11">
    <conflict type="erroneous initiation">
        <sequence resource="EMBL-CDS" id="AAA67586"/>
    </conflict>
</comment>
<gene>
    <name evidence="1" type="primary">wecB</name>
    <name evidence="10" type="synonym">nfrC</name>
    <name evidence="9" type="synonym">rffE</name>
    <name type="synonym">yifF</name>
    <name type="ordered locus">b3786</name>
    <name type="ordered locus">JW5600</name>
</gene>
<feature type="chain" id="PRO_0000208527" description="UDP-N-acetylglucosamine 2-epimerase">
    <location>
        <begin position="1"/>
        <end position="376"/>
    </location>
</feature>
<feature type="binding site" evidence="1 2 4">
    <location>
        <position position="10"/>
    </location>
    <ligand>
        <name>substrate</name>
    </ligand>
</feature>
<feature type="binding site" evidence="1 4">
    <location>
        <position position="15"/>
    </location>
    <ligand>
        <name>substrate</name>
    </ligand>
</feature>
<feature type="binding site" evidence="1 4">
    <location>
        <position position="95"/>
    </location>
    <ligand>
        <name>substrate</name>
    </ligand>
</feature>
<feature type="binding site" evidence="1 4">
    <location>
        <position position="117"/>
    </location>
    <ligand>
        <name>substrate</name>
    </ligand>
</feature>
<feature type="binding site" evidence="1 2 4">
    <location>
        <position position="213"/>
    </location>
    <ligand>
        <name>substrate</name>
    </ligand>
</feature>
<feature type="binding site" evidence="1 2 4">
    <location>
        <position position="271"/>
    </location>
    <ligand>
        <name>substrate</name>
    </ligand>
</feature>
<feature type="binding site" evidence="1 2 4">
    <location>
        <position position="276"/>
    </location>
    <ligand>
        <name>substrate</name>
    </ligand>
</feature>
<feature type="binding site" evidence="1 2 4">
    <location>
        <begin position="290"/>
        <end position="292"/>
    </location>
    <ligand>
        <name>substrate</name>
    </ligand>
</feature>
<feature type="binding site" evidence="1 2 4">
    <location>
        <position position="296"/>
    </location>
    <ligand>
        <name>substrate</name>
    </ligand>
</feature>
<feature type="binding site" evidence="1 4">
    <location>
        <position position="313"/>
    </location>
    <ligand>
        <name>substrate</name>
    </ligand>
</feature>
<feature type="mutagenesis site" description="More than 100-fold increase in KM for UDP-GlcNAc." evidence="3">
    <original>K</original>
    <variation>A</variation>
    <location>
        <position position="15"/>
    </location>
</feature>
<feature type="mutagenesis site" description="Strong decrease in activity." evidence="3">
    <original>D</original>
    <variation>N</variation>
    <location>
        <position position="95"/>
    </location>
</feature>
<feature type="mutagenesis site" description="Strong decrease in activity." evidence="3">
    <original>E</original>
    <variation>Q</variation>
    <location>
        <position position="117"/>
    </location>
</feature>
<feature type="mutagenesis site" description="Strong decrease in activity." evidence="3">
    <original>E</original>
    <variation>Q</variation>
    <location>
        <position position="131"/>
    </location>
</feature>
<feature type="mutagenesis site" description="30-fold increase in KM for UDP-GlcNAc and 50-fold decrease in kcat." evidence="3">
    <original>H</original>
    <variation>N</variation>
    <location>
        <position position="213"/>
    </location>
</feature>
<feature type="sequence conflict" description="In Ref. 2; AAA67586." evidence="11" ref="2">
    <location>
        <position position="191"/>
    </location>
</feature>
<feature type="strand" evidence="15">
    <location>
        <begin position="2"/>
        <end position="7"/>
    </location>
</feature>
<feature type="helix" evidence="15">
    <location>
        <begin position="10"/>
        <end position="25"/>
    </location>
</feature>
<feature type="strand" evidence="15">
    <location>
        <begin position="30"/>
        <end position="35"/>
    </location>
</feature>
<feature type="helix" evidence="15">
    <location>
        <begin position="40"/>
        <end position="43"/>
    </location>
</feature>
<feature type="helix" evidence="15">
    <location>
        <begin position="44"/>
        <end position="49"/>
    </location>
</feature>
<feature type="strand" evidence="15">
    <location>
        <begin position="55"/>
        <end position="57"/>
    </location>
</feature>
<feature type="strand" evidence="14">
    <location>
        <begin position="62"/>
        <end position="65"/>
    </location>
</feature>
<feature type="helix" evidence="15">
    <location>
        <begin position="67"/>
        <end position="85"/>
    </location>
</feature>
<feature type="strand" evidence="15">
    <location>
        <begin position="88"/>
        <end position="93"/>
    </location>
</feature>
<feature type="helix" evidence="15">
    <location>
        <begin position="97"/>
        <end position="107"/>
    </location>
</feature>
<feature type="turn" evidence="15">
    <location>
        <begin position="108"/>
        <end position="110"/>
    </location>
</feature>
<feature type="strand" evidence="15">
    <location>
        <begin position="113"/>
        <end position="117"/>
    </location>
</feature>
<feature type="helix" evidence="15">
    <location>
        <begin position="131"/>
        <end position="139"/>
    </location>
</feature>
<feature type="strand" evidence="15">
    <location>
        <begin position="143"/>
        <end position="149"/>
    </location>
</feature>
<feature type="helix" evidence="15">
    <location>
        <begin position="150"/>
        <end position="158"/>
    </location>
</feature>
<feature type="helix" evidence="15">
    <location>
        <begin position="163"/>
        <end position="165"/>
    </location>
</feature>
<feature type="strand" evidence="15">
    <location>
        <begin position="166"/>
        <end position="168"/>
    </location>
</feature>
<feature type="helix" evidence="15">
    <location>
        <begin position="172"/>
        <end position="183"/>
    </location>
</feature>
<feature type="turn" evidence="15">
    <location>
        <begin position="184"/>
        <end position="186"/>
    </location>
</feature>
<feature type="helix" evidence="15">
    <location>
        <begin position="188"/>
        <end position="195"/>
    </location>
</feature>
<feature type="strand" evidence="15">
    <location>
        <begin position="205"/>
        <end position="211"/>
    </location>
</feature>
<feature type="strand" evidence="15">
    <location>
        <begin position="215"/>
        <end position="217"/>
    </location>
</feature>
<feature type="helix" evidence="15">
    <location>
        <begin position="220"/>
        <end position="235"/>
    </location>
</feature>
<feature type="strand" evidence="15">
    <location>
        <begin position="239"/>
        <end position="244"/>
    </location>
</feature>
<feature type="helix" evidence="15">
    <location>
        <begin position="249"/>
        <end position="259"/>
    </location>
</feature>
<feature type="strand" evidence="15">
    <location>
        <begin position="265"/>
        <end position="268"/>
    </location>
</feature>
<feature type="helix" evidence="15">
    <location>
        <begin position="273"/>
        <end position="282"/>
    </location>
</feature>
<feature type="strand" evidence="15">
    <location>
        <begin position="284"/>
        <end position="291"/>
    </location>
</feature>
<feature type="helix" evidence="15">
    <location>
        <begin position="293"/>
        <end position="295"/>
    </location>
</feature>
<feature type="helix" evidence="15">
    <location>
        <begin position="297"/>
        <end position="300"/>
    </location>
</feature>
<feature type="strand" evidence="15">
    <location>
        <begin position="304"/>
        <end position="309"/>
    </location>
</feature>
<feature type="helix" evidence="15">
    <location>
        <begin position="314"/>
        <end position="318"/>
    </location>
</feature>
<feature type="strand" evidence="15">
    <location>
        <begin position="321"/>
        <end position="325"/>
    </location>
</feature>
<feature type="helix" evidence="15">
    <location>
        <begin position="329"/>
        <end position="341"/>
    </location>
</feature>
<feature type="helix" evidence="15">
    <location>
        <begin position="343"/>
        <end position="350"/>
    </location>
</feature>
<feature type="helix" evidence="15">
    <location>
        <begin position="361"/>
        <end position="371"/>
    </location>
</feature>
<accession>P27828</accession>
<accession>P76753</accession>
<accession>Q2M894</accession>
<protein>
    <recommendedName>
        <fullName evidence="1 11">UDP-N-acetylglucosamine 2-epimerase</fullName>
        <ecNumber evidence="1 3 8">5.1.3.14</ecNumber>
    </recommendedName>
    <alternativeName>
        <fullName evidence="13">Bacteriophage N4 adsorption protein C</fullName>
    </alternativeName>
    <alternativeName>
        <fullName evidence="1 11">UDP-GlcNAc-2-epimerase</fullName>
    </alternativeName>
</protein>
<proteinExistence type="evidence at protein level"/>
<evidence type="ECO:0000255" key="1">
    <source>
        <dbReference type="HAMAP-Rule" id="MF_02028"/>
    </source>
</evidence>
<evidence type="ECO:0000269" key="2">
    <source>
    </source>
</evidence>
<evidence type="ECO:0000269" key="3">
    <source>
    </source>
</evidence>
<evidence type="ECO:0000269" key="4">
    <source>
    </source>
</evidence>
<evidence type="ECO:0000269" key="5">
    <source>
    </source>
</evidence>
<evidence type="ECO:0000269" key="6">
    <source>
    </source>
</evidence>
<evidence type="ECO:0000269" key="7">
    <source>
    </source>
</evidence>
<evidence type="ECO:0000269" key="8">
    <source ref="9"/>
</evidence>
<evidence type="ECO:0000303" key="9">
    <source>
    </source>
</evidence>
<evidence type="ECO:0000303" key="10">
    <source>
    </source>
</evidence>
<evidence type="ECO:0000305" key="11"/>
<evidence type="ECO:0000305" key="12">
    <source>
    </source>
</evidence>
<evidence type="ECO:0000305" key="13">
    <source>
    </source>
</evidence>
<evidence type="ECO:0007829" key="14">
    <source>
        <dbReference type="PDB" id="1F6D"/>
    </source>
</evidence>
<evidence type="ECO:0007829" key="15">
    <source>
        <dbReference type="PDB" id="1VGV"/>
    </source>
</evidence>